<comment type="function">
    <text evidence="1">RNA chaperone that binds small regulatory RNA (sRNAs) and mRNAs to facilitate mRNA translational regulation in response to envelope stress, environmental stress and changes in metabolite concentrations. Also binds with high specificity to tRNAs.</text>
</comment>
<comment type="subunit">
    <text evidence="1">Homohexamer.</text>
</comment>
<comment type="similarity">
    <text evidence="1">Belongs to the Hfq family.</text>
</comment>
<name>HFQ_PSEAB</name>
<sequence>MSKGHSLQDPYLNTLRKERVPVSIYLVNGIKLQGQIESFDQFVILLKNTVSQMVYKHAISTVVPSRPVRLPSGDQPAEPGNA</sequence>
<evidence type="ECO:0000255" key="1">
    <source>
        <dbReference type="HAMAP-Rule" id="MF_00436"/>
    </source>
</evidence>
<evidence type="ECO:0000255" key="2">
    <source>
        <dbReference type="PROSITE-ProRule" id="PRU01346"/>
    </source>
</evidence>
<proteinExistence type="inferred from homology"/>
<feature type="chain" id="PRO_1000025925" description="RNA-binding protein Hfq">
    <location>
        <begin position="1"/>
        <end position="82"/>
    </location>
</feature>
<feature type="domain" description="Sm" evidence="2">
    <location>
        <begin position="9"/>
        <end position="68"/>
    </location>
</feature>
<dbReference type="EMBL" id="CP000438">
    <property type="protein sequence ID" value="ABJ14329.1"/>
    <property type="molecule type" value="Genomic_DNA"/>
</dbReference>
<dbReference type="RefSeq" id="WP_003095657.1">
    <property type="nucleotide sequence ID" value="NZ_CP034244.1"/>
</dbReference>
<dbReference type="SMR" id="Q02F74"/>
<dbReference type="GeneID" id="77223493"/>
<dbReference type="KEGG" id="pau:PA14_65310"/>
<dbReference type="PseudoCAP" id="PA14_65310"/>
<dbReference type="HOGENOM" id="CLU_113688_2_2_6"/>
<dbReference type="BioCyc" id="PAER208963:G1G74-5519-MONOMER"/>
<dbReference type="Proteomes" id="UP000000653">
    <property type="component" value="Chromosome"/>
</dbReference>
<dbReference type="GO" id="GO:0005829">
    <property type="term" value="C:cytosol"/>
    <property type="evidence" value="ECO:0007669"/>
    <property type="project" value="TreeGrafter"/>
</dbReference>
<dbReference type="GO" id="GO:0003723">
    <property type="term" value="F:RNA binding"/>
    <property type="evidence" value="ECO:0007669"/>
    <property type="project" value="UniProtKB-UniRule"/>
</dbReference>
<dbReference type="GO" id="GO:0006355">
    <property type="term" value="P:regulation of DNA-templated transcription"/>
    <property type="evidence" value="ECO:0007669"/>
    <property type="project" value="InterPro"/>
</dbReference>
<dbReference type="GO" id="GO:0043487">
    <property type="term" value="P:regulation of RNA stability"/>
    <property type="evidence" value="ECO:0007669"/>
    <property type="project" value="TreeGrafter"/>
</dbReference>
<dbReference type="GO" id="GO:0045974">
    <property type="term" value="P:regulation of translation, ncRNA-mediated"/>
    <property type="evidence" value="ECO:0007669"/>
    <property type="project" value="TreeGrafter"/>
</dbReference>
<dbReference type="CDD" id="cd01716">
    <property type="entry name" value="Hfq"/>
    <property type="match status" value="1"/>
</dbReference>
<dbReference type="FunFam" id="2.30.30.100:FF:000001">
    <property type="entry name" value="RNA-binding protein Hfq"/>
    <property type="match status" value="1"/>
</dbReference>
<dbReference type="Gene3D" id="2.30.30.100">
    <property type="match status" value="1"/>
</dbReference>
<dbReference type="HAMAP" id="MF_00436">
    <property type="entry name" value="Hfq"/>
    <property type="match status" value="1"/>
</dbReference>
<dbReference type="InterPro" id="IPR005001">
    <property type="entry name" value="Hfq"/>
</dbReference>
<dbReference type="InterPro" id="IPR010920">
    <property type="entry name" value="LSM_dom_sf"/>
</dbReference>
<dbReference type="InterPro" id="IPR047575">
    <property type="entry name" value="Sm"/>
</dbReference>
<dbReference type="NCBIfam" id="TIGR02383">
    <property type="entry name" value="Hfq"/>
    <property type="match status" value="1"/>
</dbReference>
<dbReference type="NCBIfam" id="NF001602">
    <property type="entry name" value="PRK00395.1"/>
    <property type="match status" value="1"/>
</dbReference>
<dbReference type="PANTHER" id="PTHR34772">
    <property type="entry name" value="RNA-BINDING PROTEIN HFQ"/>
    <property type="match status" value="1"/>
</dbReference>
<dbReference type="PANTHER" id="PTHR34772:SF1">
    <property type="entry name" value="RNA-BINDING PROTEIN HFQ"/>
    <property type="match status" value="1"/>
</dbReference>
<dbReference type="Pfam" id="PF17209">
    <property type="entry name" value="Hfq"/>
    <property type="match status" value="1"/>
</dbReference>
<dbReference type="SUPFAM" id="SSF50182">
    <property type="entry name" value="Sm-like ribonucleoproteins"/>
    <property type="match status" value="1"/>
</dbReference>
<dbReference type="PROSITE" id="PS52002">
    <property type="entry name" value="SM"/>
    <property type="match status" value="1"/>
</dbReference>
<gene>
    <name evidence="1" type="primary">hfq</name>
    <name type="ordered locus">PA14_65310</name>
</gene>
<organism>
    <name type="scientific">Pseudomonas aeruginosa (strain UCBPP-PA14)</name>
    <dbReference type="NCBI Taxonomy" id="208963"/>
    <lineage>
        <taxon>Bacteria</taxon>
        <taxon>Pseudomonadati</taxon>
        <taxon>Pseudomonadota</taxon>
        <taxon>Gammaproteobacteria</taxon>
        <taxon>Pseudomonadales</taxon>
        <taxon>Pseudomonadaceae</taxon>
        <taxon>Pseudomonas</taxon>
    </lineage>
</organism>
<accession>Q02F74</accession>
<keyword id="KW-0694">RNA-binding</keyword>
<keyword id="KW-0346">Stress response</keyword>
<reference key="1">
    <citation type="journal article" date="2006" name="Genome Biol.">
        <title>Genomic analysis reveals that Pseudomonas aeruginosa virulence is combinatorial.</title>
        <authorList>
            <person name="Lee D.G."/>
            <person name="Urbach J.M."/>
            <person name="Wu G."/>
            <person name="Liberati N.T."/>
            <person name="Feinbaum R.L."/>
            <person name="Miyata S."/>
            <person name="Diggins L.T."/>
            <person name="He J."/>
            <person name="Saucier M."/>
            <person name="Deziel E."/>
            <person name="Friedman L."/>
            <person name="Li L."/>
            <person name="Grills G."/>
            <person name="Montgomery K."/>
            <person name="Kucherlapati R."/>
            <person name="Rahme L.G."/>
            <person name="Ausubel F.M."/>
        </authorList>
    </citation>
    <scope>NUCLEOTIDE SEQUENCE [LARGE SCALE GENOMIC DNA]</scope>
    <source>
        <strain>UCBPP-PA14</strain>
    </source>
</reference>
<protein>
    <recommendedName>
        <fullName evidence="1">RNA-binding protein Hfq</fullName>
    </recommendedName>
</protein>